<name>MGSA_YERPA</name>
<proteinExistence type="inferred from homology"/>
<accession>Q1CA21</accession>
<comment type="function">
    <text evidence="1">Catalyzes the formation of methylglyoxal from dihydroxyacetone phosphate.</text>
</comment>
<comment type="catalytic activity">
    <reaction evidence="1">
        <text>dihydroxyacetone phosphate = methylglyoxal + phosphate</text>
        <dbReference type="Rhea" id="RHEA:17937"/>
        <dbReference type="ChEBI" id="CHEBI:17158"/>
        <dbReference type="ChEBI" id="CHEBI:43474"/>
        <dbReference type="ChEBI" id="CHEBI:57642"/>
        <dbReference type="EC" id="4.2.3.3"/>
    </reaction>
</comment>
<comment type="similarity">
    <text evidence="1">Belongs to the methylglyoxal synthase family.</text>
</comment>
<evidence type="ECO:0000255" key="1">
    <source>
        <dbReference type="HAMAP-Rule" id="MF_00549"/>
    </source>
</evidence>
<keyword id="KW-0456">Lyase</keyword>
<reference key="1">
    <citation type="journal article" date="2006" name="J. Bacteriol.">
        <title>Complete genome sequence of Yersinia pestis strains Antiqua and Nepal516: evidence of gene reduction in an emerging pathogen.</title>
        <authorList>
            <person name="Chain P.S.G."/>
            <person name="Hu P."/>
            <person name="Malfatti S.A."/>
            <person name="Radnedge L."/>
            <person name="Larimer F."/>
            <person name="Vergez L.M."/>
            <person name="Worsham P."/>
            <person name="Chu M.C."/>
            <person name="Andersen G.L."/>
        </authorList>
    </citation>
    <scope>NUCLEOTIDE SEQUENCE [LARGE SCALE GENOMIC DNA]</scope>
    <source>
        <strain>Antiqua</strain>
    </source>
</reference>
<feature type="chain" id="PRO_1000017834" description="Methylglyoxal synthase">
    <location>
        <begin position="1"/>
        <end position="154"/>
    </location>
</feature>
<feature type="domain" description="MGS-like" evidence="1">
    <location>
        <begin position="1"/>
        <end position="154"/>
    </location>
</feature>
<feature type="active site" description="Proton donor/acceptor" evidence="1">
    <location>
        <position position="71"/>
    </location>
</feature>
<feature type="binding site" evidence="1">
    <location>
        <position position="19"/>
    </location>
    <ligand>
        <name>substrate</name>
    </ligand>
</feature>
<feature type="binding site" evidence="1">
    <location>
        <position position="23"/>
    </location>
    <ligand>
        <name>substrate</name>
    </ligand>
</feature>
<feature type="binding site" evidence="1">
    <location>
        <begin position="45"/>
        <end position="48"/>
    </location>
    <ligand>
        <name>substrate</name>
    </ligand>
</feature>
<feature type="binding site" evidence="1">
    <location>
        <begin position="65"/>
        <end position="66"/>
    </location>
    <ligand>
        <name>substrate</name>
    </ligand>
</feature>
<feature type="binding site" evidence="1">
    <location>
        <position position="98"/>
    </location>
    <ligand>
        <name>substrate</name>
    </ligand>
</feature>
<gene>
    <name evidence="1" type="primary">mgsA</name>
    <name type="ordered locus">YPA_0733</name>
</gene>
<dbReference type="EC" id="4.2.3.3" evidence="1"/>
<dbReference type="EMBL" id="CP000308">
    <property type="protein sequence ID" value="ABG12701.1"/>
    <property type="molecule type" value="Genomic_DNA"/>
</dbReference>
<dbReference type="RefSeq" id="WP_002213060.1">
    <property type="nucleotide sequence ID" value="NZ_CP009906.1"/>
</dbReference>
<dbReference type="SMR" id="Q1CA21"/>
<dbReference type="KEGG" id="ypa:YPA_0733"/>
<dbReference type="Proteomes" id="UP000001971">
    <property type="component" value="Chromosome"/>
</dbReference>
<dbReference type="GO" id="GO:0005829">
    <property type="term" value="C:cytosol"/>
    <property type="evidence" value="ECO:0007669"/>
    <property type="project" value="TreeGrafter"/>
</dbReference>
<dbReference type="GO" id="GO:0008929">
    <property type="term" value="F:methylglyoxal synthase activity"/>
    <property type="evidence" value="ECO:0007669"/>
    <property type="project" value="UniProtKB-UniRule"/>
</dbReference>
<dbReference type="GO" id="GO:0019242">
    <property type="term" value="P:methylglyoxal biosynthetic process"/>
    <property type="evidence" value="ECO:0007669"/>
    <property type="project" value="UniProtKB-UniRule"/>
</dbReference>
<dbReference type="CDD" id="cd01422">
    <property type="entry name" value="MGS"/>
    <property type="match status" value="1"/>
</dbReference>
<dbReference type="FunFam" id="3.40.50.1380:FF:000002">
    <property type="entry name" value="Methylglyoxal synthase"/>
    <property type="match status" value="1"/>
</dbReference>
<dbReference type="Gene3D" id="3.40.50.1380">
    <property type="entry name" value="Methylglyoxal synthase-like domain"/>
    <property type="match status" value="1"/>
</dbReference>
<dbReference type="HAMAP" id="MF_00549">
    <property type="entry name" value="Methylglyoxal_synth"/>
    <property type="match status" value="1"/>
</dbReference>
<dbReference type="InterPro" id="IPR004363">
    <property type="entry name" value="Methylgl_synth"/>
</dbReference>
<dbReference type="InterPro" id="IPR018148">
    <property type="entry name" value="Methylglyoxal_synth_AS"/>
</dbReference>
<dbReference type="InterPro" id="IPR011607">
    <property type="entry name" value="MGS-like_dom"/>
</dbReference>
<dbReference type="InterPro" id="IPR036914">
    <property type="entry name" value="MGS-like_dom_sf"/>
</dbReference>
<dbReference type="NCBIfam" id="TIGR00160">
    <property type="entry name" value="MGSA"/>
    <property type="match status" value="1"/>
</dbReference>
<dbReference type="NCBIfam" id="NF003559">
    <property type="entry name" value="PRK05234.1"/>
    <property type="match status" value="1"/>
</dbReference>
<dbReference type="PANTHER" id="PTHR30492">
    <property type="entry name" value="METHYLGLYOXAL SYNTHASE"/>
    <property type="match status" value="1"/>
</dbReference>
<dbReference type="PANTHER" id="PTHR30492:SF0">
    <property type="entry name" value="METHYLGLYOXAL SYNTHASE"/>
    <property type="match status" value="1"/>
</dbReference>
<dbReference type="Pfam" id="PF02142">
    <property type="entry name" value="MGS"/>
    <property type="match status" value="1"/>
</dbReference>
<dbReference type="PIRSF" id="PIRSF006614">
    <property type="entry name" value="Methylglyox_syn"/>
    <property type="match status" value="1"/>
</dbReference>
<dbReference type="SMART" id="SM00851">
    <property type="entry name" value="MGS"/>
    <property type="match status" value="1"/>
</dbReference>
<dbReference type="SUPFAM" id="SSF52335">
    <property type="entry name" value="Methylglyoxal synthase-like"/>
    <property type="match status" value="1"/>
</dbReference>
<dbReference type="PROSITE" id="PS01335">
    <property type="entry name" value="METHYLGLYOXAL_SYNTH"/>
    <property type="match status" value="1"/>
</dbReference>
<dbReference type="PROSITE" id="PS51855">
    <property type="entry name" value="MGS"/>
    <property type="match status" value="1"/>
</dbReference>
<sequence>MELTTRTIAARKHIALVSHDHCKKSLLAWVMENRDLLAQHELYATGTTGNLVQKATGIDVHCLLSGPMGGDQEVGALISEKKIDILIFFWDPLNAVPHDPDVKALLRLATVWNIPVATNRSTADFLIGSTLFSSEVTIAIPDYDRYMQQRLDLK</sequence>
<protein>
    <recommendedName>
        <fullName evidence="1">Methylglyoxal synthase</fullName>
        <shortName evidence="1">MGS</shortName>
        <ecNumber evidence="1">4.2.3.3</ecNumber>
    </recommendedName>
</protein>
<organism>
    <name type="scientific">Yersinia pestis bv. Antiqua (strain Antiqua)</name>
    <dbReference type="NCBI Taxonomy" id="360102"/>
    <lineage>
        <taxon>Bacteria</taxon>
        <taxon>Pseudomonadati</taxon>
        <taxon>Pseudomonadota</taxon>
        <taxon>Gammaproteobacteria</taxon>
        <taxon>Enterobacterales</taxon>
        <taxon>Yersiniaceae</taxon>
        <taxon>Yersinia</taxon>
    </lineage>
</organism>